<organism evidence="2">
    <name type="scientific">Macrobrachium rosenbergii</name>
    <name type="common">Giant fresh water prawn</name>
    <dbReference type="NCBI Taxonomy" id="79674"/>
    <lineage>
        <taxon>Eukaryota</taxon>
        <taxon>Metazoa</taxon>
        <taxon>Ecdysozoa</taxon>
        <taxon>Arthropoda</taxon>
        <taxon>Crustacea</taxon>
        <taxon>Multicrustacea</taxon>
        <taxon>Malacostraca</taxon>
        <taxon>Eumalacostraca</taxon>
        <taxon>Eucarida</taxon>
        <taxon>Decapoda</taxon>
        <taxon>Pleocyemata</taxon>
        <taxon>Caridea</taxon>
        <taxon>Palaemonoidea</taxon>
        <taxon>Palaemonidae</taxon>
        <taxon>Macrobrachium</taxon>
    </lineage>
</organism>
<name>FAR5_MACRS</name>
<keyword id="KW-0027">Amidation</keyword>
<keyword id="KW-0903">Direct protein sequencing</keyword>
<keyword id="KW-0527">Neuropeptide</keyword>
<keyword id="KW-0964">Secreted</keyword>
<reference evidence="2" key="1">
    <citation type="journal article" date="1998" name="Comp. Biochem. Physiol.">
        <title>Novel FMRFamide-like neuropeptides from the eyestalk of the giant freshwater prawn Macrobrachium rosenbergii.</title>
        <authorList>
            <person name="Sithigorngul P."/>
            <person name="Saraithongkum W."/>
            <person name="Jaideechoey S."/>
            <person name="Longyant S."/>
            <person name="Sithigorngul W."/>
        </authorList>
    </citation>
    <scope>PROTEIN SEQUENCE</scope>
    <scope>AMIDATION AT PHE-10</scope>
    <scope>MASS SPECTROMETRY</scope>
    <source>
        <tissue>Eyestalk</tissue>
    </source>
</reference>
<accession>P83278</accession>
<sequence length="10" mass="1244">DRTPALRLRF</sequence>
<feature type="peptide" id="PRO_0000043688" description="FMRFamide-like neuropeptide FLP5">
    <location>
        <begin position="1"/>
        <end position="10"/>
    </location>
</feature>
<feature type="modified residue" description="Phenylalanine amide" evidence="1">
    <location>
        <position position="10"/>
    </location>
</feature>
<protein>
    <recommendedName>
        <fullName>FMRFamide-like neuropeptide FLP5</fullName>
    </recommendedName>
    <alternativeName>
        <fullName>DRTPALRLRF-amide</fullName>
    </alternativeName>
</protein>
<proteinExistence type="evidence at protein level"/>
<dbReference type="GO" id="GO:0005576">
    <property type="term" value="C:extracellular region"/>
    <property type="evidence" value="ECO:0007669"/>
    <property type="project" value="UniProtKB-SubCell"/>
</dbReference>
<dbReference type="GO" id="GO:0007218">
    <property type="term" value="P:neuropeptide signaling pathway"/>
    <property type="evidence" value="ECO:0000304"/>
    <property type="project" value="UniProtKB"/>
</dbReference>
<evidence type="ECO:0000269" key="1">
    <source ref="1"/>
</evidence>
<evidence type="ECO:0000305" key="2"/>
<comment type="subcellular location">
    <subcellularLocation>
        <location>Secreted</location>
    </subcellularLocation>
</comment>
<comment type="mass spectrometry" mass="1243.4" method="MALDI" evidence="1"/>
<comment type="similarity">
    <text evidence="2">Belongs to the FARP (FMRFamide related peptide) family.</text>
</comment>